<evidence type="ECO:0000250" key="1"/>
<evidence type="ECO:0000250" key="2">
    <source>
        <dbReference type="UniProtKB" id="Q8JFY9"/>
    </source>
</evidence>
<evidence type="ECO:0000255" key="3">
    <source>
        <dbReference type="PROSITE-ProRule" id="PRU01304"/>
    </source>
</evidence>
<evidence type="ECO:0000305" key="4"/>
<accession>B1WBB4</accession>
<reference key="1">
    <citation type="submission" date="2008-04" db="EMBL/GenBank/DDBJ databases">
        <authorList>
            <consortium name="NIH - Xenopus Gene Collection (XGC) project"/>
        </authorList>
    </citation>
    <scope>NUCLEOTIDE SEQUENCE [LARGE SCALE MRNA]</scope>
    <source>
        <tissue>Spleen</tissue>
    </source>
</reference>
<organism>
    <name type="scientific">Xenopus laevis</name>
    <name type="common">African clawed frog</name>
    <dbReference type="NCBI Taxonomy" id="8355"/>
    <lineage>
        <taxon>Eukaryota</taxon>
        <taxon>Metazoa</taxon>
        <taxon>Chordata</taxon>
        <taxon>Craniata</taxon>
        <taxon>Vertebrata</taxon>
        <taxon>Euteleostomi</taxon>
        <taxon>Amphibia</taxon>
        <taxon>Batrachia</taxon>
        <taxon>Anura</taxon>
        <taxon>Pipoidea</taxon>
        <taxon>Pipidae</taxon>
        <taxon>Xenopodinae</taxon>
        <taxon>Xenopus</taxon>
        <taxon>Xenopus</taxon>
    </lineage>
</organism>
<name>ENDUB_XENLA</name>
<proteinExistence type="evidence at transcript level"/>
<feature type="chain" id="PRO_0000350628" description="Poly(U)-specific endoribonuclease-B">
    <location>
        <begin position="1"/>
        <end position="292"/>
    </location>
</feature>
<feature type="domain" description="EndoU" evidence="3">
    <location>
        <begin position="8"/>
        <end position="285"/>
    </location>
</feature>
<feature type="active site" evidence="3">
    <location>
        <position position="162"/>
    </location>
</feature>
<feature type="active site" evidence="3">
    <location>
        <position position="178"/>
    </location>
</feature>
<feature type="active site" evidence="3">
    <location>
        <position position="224"/>
    </location>
</feature>
<keyword id="KW-0255">Endonuclease</keyword>
<keyword id="KW-0378">Hydrolase</keyword>
<keyword id="KW-0456">Lyase</keyword>
<keyword id="KW-0464">Manganese</keyword>
<keyword id="KW-0479">Metal-binding</keyword>
<keyword id="KW-0540">Nuclease</keyword>
<keyword id="KW-0539">Nucleus</keyword>
<keyword id="KW-1185">Reference proteome</keyword>
<keyword id="KW-0694">RNA-binding</keyword>
<protein>
    <recommendedName>
        <fullName>Poly(U)-specific endoribonuclease-B</fullName>
        <ecNumber evidence="2">4.6.1.-</ecNumber>
    </recommendedName>
    <alternativeName>
        <fullName>Protein endoU-B</fullName>
    </alternativeName>
    <alternativeName>
        <fullName>Uridylate-specific endoribonuclease-B</fullName>
    </alternativeName>
    <alternativeName>
        <fullName>XendoU-B</fullName>
    </alternativeName>
</protein>
<gene>
    <name type="primary">endou-b</name>
</gene>
<sequence length="292" mass="33737">MEANRGQVNHELSKLFNELWDADVNRMKAGKDYRISLQGKAGYVPARSNQAKDSASYPLFQFVDEEKLKSKKTFATFISLLDNYEMDTGVAEVVTPEEIAENNNFLDAILETKVMKMAHDYLVRKNQAKPSQNDFKVQLYSIWFQLYSRAPGSRPDSCGFEHVFVGESKRGKEMMGLHNWVQFYLQEKRKNIDYKGYVARQNKSRPDEDDQVLNLQFSWKEMVKPVGSSFIGVSPEFEFALYTIVFLASQAKMSREVIRLEEYELQIVVNRHGRYIGTAYPALLSTNNPDLY</sequence>
<comment type="function">
    <text evidence="2">Poly(U)-specific endoribonuclease involved in the processing of intron-encoded box C/D snoRNAs, such as U16 and U86. Releases products that have 2',3'-cyclic phosphate termini at the 3'-end.</text>
</comment>
<comment type="catalytic activity">
    <reaction evidence="2">
        <text>uridylyl-uridylyl-ribonucleotide-RNA = a 3'-end uridylyl-2',3'-cyclophospho-uridine-RNA + a 5'-end dephospho-ribonucleoside-RNA</text>
        <dbReference type="Rhea" id="RHEA:67732"/>
        <dbReference type="Rhea" id="RHEA-COMP:13936"/>
        <dbReference type="Rhea" id="RHEA-COMP:17334"/>
        <dbReference type="Rhea" id="RHEA-COMP:17335"/>
        <dbReference type="ChEBI" id="CHEBI:138284"/>
        <dbReference type="ChEBI" id="CHEBI:173079"/>
        <dbReference type="ChEBI" id="CHEBI:173080"/>
    </reaction>
    <physiologicalReaction direction="left-to-right" evidence="2">
        <dbReference type="Rhea" id="RHEA:67733"/>
    </physiologicalReaction>
</comment>
<comment type="cofactor">
    <cofactor evidence="1">
        <name>Mn(2+)</name>
        <dbReference type="ChEBI" id="CHEBI:29035"/>
    </cofactor>
</comment>
<comment type="subunit">
    <text evidence="1">Monomer.</text>
</comment>
<comment type="subcellular location">
    <subcellularLocation>
        <location evidence="1">Nucleus</location>
    </subcellularLocation>
</comment>
<comment type="similarity">
    <text evidence="4">Belongs to the ENDOU family.</text>
</comment>
<dbReference type="EC" id="4.6.1.-" evidence="2"/>
<dbReference type="EMBL" id="BC161693">
    <property type="protein sequence ID" value="AAI61693.1"/>
    <property type="molecule type" value="mRNA"/>
</dbReference>
<dbReference type="RefSeq" id="NP_001128550.1">
    <property type="nucleotide sequence ID" value="NM_001135078.1"/>
</dbReference>
<dbReference type="SMR" id="B1WBB4"/>
<dbReference type="GeneID" id="100189581"/>
<dbReference type="KEGG" id="xla:100189581"/>
<dbReference type="AGR" id="Xenbase:XB-GENE-6252901"/>
<dbReference type="CTD" id="100189581"/>
<dbReference type="Xenbase" id="XB-GENE-6252901">
    <property type="gene designation" value="endoul.S"/>
</dbReference>
<dbReference type="OMA" id="NWLYFAD"/>
<dbReference type="OrthoDB" id="430326at2759"/>
<dbReference type="Proteomes" id="UP000186698">
    <property type="component" value="Chromosome 3S"/>
</dbReference>
<dbReference type="Bgee" id="100189581">
    <property type="expression patterns" value="Expressed in zone of skin and 19 other cell types or tissues"/>
</dbReference>
<dbReference type="GO" id="GO:0005634">
    <property type="term" value="C:nucleus"/>
    <property type="evidence" value="ECO:0007669"/>
    <property type="project" value="UniProtKB-SubCell"/>
</dbReference>
<dbReference type="GO" id="GO:0016829">
    <property type="term" value="F:lyase activity"/>
    <property type="evidence" value="ECO:0007669"/>
    <property type="project" value="UniProtKB-KW"/>
</dbReference>
<dbReference type="GO" id="GO:0046872">
    <property type="term" value="F:metal ion binding"/>
    <property type="evidence" value="ECO:0007669"/>
    <property type="project" value="UniProtKB-KW"/>
</dbReference>
<dbReference type="GO" id="GO:0003723">
    <property type="term" value="F:RNA binding"/>
    <property type="evidence" value="ECO:0000250"/>
    <property type="project" value="UniProtKB"/>
</dbReference>
<dbReference type="GO" id="GO:0004521">
    <property type="term" value="F:RNA endonuclease activity"/>
    <property type="evidence" value="ECO:0000250"/>
    <property type="project" value="UniProtKB"/>
</dbReference>
<dbReference type="CDD" id="cd21159">
    <property type="entry name" value="XendoU"/>
    <property type="match status" value="1"/>
</dbReference>
<dbReference type="InterPro" id="IPR039787">
    <property type="entry name" value="ENDOU"/>
</dbReference>
<dbReference type="InterPro" id="IPR037227">
    <property type="entry name" value="EndoU-like"/>
</dbReference>
<dbReference type="InterPro" id="IPR018998">
    <property type="entry name" value="EndoU_C"/>
</dbReference>
<dbReference type="PANTHER" id="PTHR12439">
    <property type="entry name" value="PLACENTAL PROTEIN 11-RELATED"/>
    <property type="match status" value="1"/>
</dbReference>
<dbReference type="PANTHER" id="PTHR12439:SF11">
    <property type="entry name" value="URIDYLATE-SPECIFIC ENDORIBONUCLEASE"/>
    <property type="match status" value="1"/>
</dbReference>
<dbReference type="Pfam" id="PF09412">
    <property type="entry name" value="XendoU"/>
    <property type="match status" value="1"/>
</dbReference>
<dbReference type="SUPFAM" id="SSF142877">
    <property type="entry name" value="EndoU-like"/>
    <property type="match status" value="1"/>
</dbReference>
<dbReference type="PROSITE" id="PS51959">
    <property type="entry name" value="ENDOU"/>
    <property type="match status" value="1"/>
</dbReference>